<keyword id="KW-0143">Chaperone</keyword>
<keyword id="KW-0963">Cytoplasm</keyword>
<keyword id="KW-0235">DNA replication</keyword>
<keyword id="KW-0479">Metal-binding</keyword>
<keyword id="KW-1185">Reference proteome</keyword>
<keyword id="KW-0677">Repeat</keyword>
<keyword id="KW-0346">Stress response</keyword>
<keyword id="KW-0862">Zinc</keyword>
<keyword id="KW-0863">Zinc-finger</keyword>
<evidence type="ECO:0000255" key="1">
    <source>
        <dbReference type="HAMAP-Rule" id="MF_01152"/>
    </source>
</evidence>
<comment type="function">
    <text evidence="1">Participates actively in the response to hyperosmotic and heat shock by preventing the aggregation of stress-denatured proteins and by disaggregating proteins, also in an autonomous, DnaK-independent fashion. Unfolded proteins bind initially to DnaJ; upon interaction with the DnaJ-bound protein, DnaK hydrolyzes its bound ATP, resulting in the formation of a stable complex. GrpE releases ADP from DnaK; ATP binding to DnaK triggers the release of the substrate protein, thus completing the reaction cycle. Several rounds of ATP-dependent interactions between DnaJ, DnaK and GrpE are required for fully efficient folding. Also involved, together with DnaK and GrpE, in the DNA replication of plasmids through activation of initiation proteins.</text>
</comment>
<comment type="cofactor">
    <cofactor evidence="1">
        <name>Zn(2+)</name>
        <dbReference type="ChEBI" id="CHEBI:29105"/>
    </cofactor>
    <text evidence="1">Binds 2 Zn(2+) ions per monomer.</text>
</comment>
<comment type="subunit">
    <text evidence="1">Homodimer.</text>
</comment>
<comment type="subcellular location">
    <subcellularLocation>
        <location evidence="1">Cytoplasm</location>
    </subcellularLocation>
</comment>
<comment type="domain">
    <text evidence="1">The J domain is necessary and sufficient to stimulate DnaK ATPase activity. Zinc center 1 plays an important role in the autonomous, DnaK-independent chaperone activity of DnaJ. Zinc center 2 is essential for interaction with DnaK and for DnaJ activity.</text>
</comment>
<comment type="similarity">
    <text evidence="1">Belongs to the DnaJ family.</text>
</comment>
<dbReference type="EMBL" id="AL935263">
    <property type="protein sequence ID" value="CCC79272.1"/>
    <property type="molecule type" value="Genomic_DNA"/>
</dbReference>
<dbReference type="RefSeq" id="WP_003640710.1">
    <property type="nucleotide sequence ID" value="NC_004567.2"/>
</dbReference>
<dbReference type="RefSeq" id="YP_004889786.1">
    <property type="nucleotide sequence ID" value="NC_004567.2"/>
</dbReference>
<dbReference type="SMR" id="Q88VM1"/>
<dbReference type="STRING" id="220668.lp_2026"/>
<dbReference type="EnsemblBacteria" id="CCC79272">
    <property type="protein sequence ID" value="CCC79272"/>
    <property type="gene ID" value="lp_2026"/>
</dbReference>
<dbReference type="GeneID" id="89669309"/>
<dbReference type="KEGG" id="lpl:lp_2026"/>
<dbReference type="PATRIC" id="fig|220668.9.peg.1711"/>
<dbReference type="eggNOG" id="COG0484">
    <property type="taxonomic scope" value="Bacteria"/>
</dbReference>
<dbReference type="HOGENOM" id="CLU_017633_0_7_9"/>
<dbReference type="OrthoDB" id="9779889at2"/>
<dbReference type="PhylomeDB" id="Q88VM1"/>
<dbReference type="Proteomes" id="UP000000432">
    <property type="component" value="Chromosome"/>
</dbReference>
<dbReference type="GO" id="GO:0005737">
    <property type="term" value="C:cytoplasm"/>
    <property type="evidence" value="ECO:0007669"/>
    <property type="project" value="UniProtKB-SubCell"/>
</dbReference>
<dbReference type="GO" id="GO:0005524">
    <property type="term" value="F:ATP binding"/>
    <property type="evidence" value="ECO:0007669"/>
    <property type="project" value="InterPro"/>
</dbReference>
<dbReference type="GO" id="GO:0031072">
    <property type="term" value="F:heat shock protein binding"/>
    <property type="evidence" value="ECO:0007669"/>
    <property type="project" value="InterPro"/>
</dbReference>
<dbReference type="GO" id="GO:0051082">
    <property type="term" value="F:unfolded protein binding"/>
    <property type="evidence" value="ECO:0007669"/>
    <property type="project" value="UniProtKB-UniRule"/>
</dbReference>
<dbReference type="GO" id="GO:0008270">
    <property type="term" value="F:zinc ion binding"/>
    <property type="evidence" value="ECO:0007669"/>
    <property type="project" value="UniProtKB-UniRule"/>
</dbReference>
<dbReference type="GO" id="GO:0051085">
    <property type="term" value="P:chaperone cofactor-dependent protein refolding"/>
    <property type="evidence" value="ECO:0007669"/>
    <property type="project" value="TreeGrafter"/>
</dbReference>
<dbReference type="GO" id="GO:0006260">
    <property type="term" value="P:DNA replication"/>
    <property type="evidence" value="ECO:0007669"/>
    <property type="project" value="UniProtKB-KW"/>
</dbReference>
<dbReference type="GO" id="GO:0042026">
    <property type="term" value="P:protein refolding"/>
    <property type="evidence" value="ECO:0007669"/>
    <property type="project" value="TreeGrafter"/>
</dbReference>
<dbReference type="GO" id="GO:0009408">
    <property type="term" value="P:response to heat"/>
    <property type="evidence" value="ECO:0007669"/>
    <property type="project" value="InterPro"/>
</dbReference>
<dbReference type="CDD" id="cd06257">
    <property type="entry name" value="DnaJ"/>
    <property type="match status" value="1"/>
</dbReference>
<dbReference type="CDD" id="cd10747">
    <property type="entry name" value="DnaJ_C"/>
    <property type="match status" value="1"/>
</dbReference>
<dbReference type="CDD" id="cd10719">
    <property type="entry name" value="DnaJ_zf"/>
    <property type="match status" value="1"/>
</dbReference>
<dbReference type="FunFam" id="1.10.287.110:FF:000031">
    <property type="entry name" value="Molecular chaperone DnaJ"/>
    <property type="match status" value="1"/>
</dbReference>
<dbReference type="FunFam" id="2.10.230.10:FF:000002">
    <property type="entry name" value="Molecular chaperone DnaJ"/>
    <property type="match status" value="1"/>
</dbReference>
<dbReference type="FunFam" id="2.60.260.20:FF:000004">
    <property type="entry name" value="Molecular chaperone DnaJ"/>
    <property type="match status" value="1"/>
</dbReference>
<dbReference type="Gene3D" id="1.10.287.110">
    <property type="entry name" value="DnaJ domain"/>
    <property type="match status" value="1"/>
</dbReference>
<dbReference type="Gene3D" id="2.10.230.10">
    <property type="entry name" value="Heat shock protein DnaJ, cysteine-rich domain"/>
    <property type="match status" value="1"/>
</dbReference>
<dbReference type="Gene3D" id="2.60.260.20">
    <property type="entry name" value="Urease metallochaperone UreE, N-terminal domain"/>
    <property type="match status" value="2"/>
</dbReference>
<dbReference type="HAMAP" id="MF_01152">
    <property type="entry name" value="DnaJ"/>
    <property type="match status" value="1"/>
</dbReference>
<dbReference type="InterPro" id="IPR012724">
    <property type="entry name" value="DnaJ"/>
</dbReference>
<dbReference type="InterPro" id="IPR002939">
    <property type="entry name" value="DnaJ_C"/>
</dbReference>
<dbReference type="InterPro" id="IPR001623">
    <property type="entry name" value="DnaJ_domain"/>
</dbReference>
<dbReference type="InterPro" id="IPR018253">
    <property type="entry name" value="DnaJ_domain_CS"/>
</dbReference>
<dbReference type="InterPro" id="IPR008971">
    <property type="entry name" value="HSP40/DnaJ_pept-bd"/>
</dbReference>
<dbReference type="InterPro" id="IPR001305">
    <property type="entry name" value="HSP_DnaJ_Cys-rich_dom"/>
</dbReference>
<dbReference type="InterPro" id="IPR036410">
    <property type="entry name" value="HSP_DnaJ_Cys-rich_dom_sf"/>
</dbReference>
<dbReference type="InterPro" id="IPR036869">
    <property type="entry name" value="J_dom_sf"/>
</dbReference>
<dbReference type="NCBIfam" id="TIGR02349">
    <property type="entry name" value="DnaJ_bact"/>
    <property type="match status" value="1"/>
</dbReference>
<dbReference type="NCBIfam" id="NF008035">
    <property type="entry name" value="PRK10767.1"/>
    <property type="match status" value="1"/>
</dbReference>
<dbReference type="NCBIfam" id="NF010869">
    <property type="entry name" value="PRK14276.1"/>
    <property type="match status" value="1"/>
</dbReference>
<dbReference type="PANTHER" id="PTHR43096:SF48">
    <property type="entry name" value="CHAPERONE PROTEIN DNAJ"/>
    <property type="match status" value="1"/>
</dbReference>
<dbReference type="PANTHER" id="PTHR43096">
    <property type="entry name" value="DNAJ HOMOLOG 1, MITOCHONDRIAL-RELATED"/>
    <property type="match status" value="1"/>
</dbReference>
<dbReference type="Pfam" id="PF00226">
    <property type="entry name" value="DnaJ"/>
    <property type="match status" value="1"/>
</dbReference>
<dbReference type="Pfam" id="PF01556">
    <property type="entry name" value="DnaJ_C"/>
    <property type="match status" value="1"/>
</dbReference>
<dbReference type="Pfam" id="PF00684">
    <property type="entry name" value="DnaJ_CXXCXGXG"/>
    <property type="match status" value="1"/>
</dbReference>
<dbReference type="PRINTS" id="PR00625">
    <property type="entry name" value="JDOMAIN"/>
</dbReference>
<dbReference type="SMART" id="SM00271">
    <property type="entry name" value="DnaJ"/>
    <property type="match status" value="1"/>
</dbReference>
<dbReference type="SUPFAM" id="SSF46565">
    <property type="entry name" value="Chaperone J-domain"/>
    <property type="match status" value="1"/>
</dbReference>
<dbReference type="SUPFAM" id="SSF57938">
    <property type="entry name" value="DnaJ/Hsp40 cysteine-rich domain"/>
    <property type="match status" value="1"/>
</dbReference>
<dbReference type="SUPFAM" id="SSF49493">
    <property type="entry name" value="HSP40/DnaJ peptide-binding domain"/>
    <property type="match status" value="2"/>
</dbReference>
<dbReference type="PROSITE" id="PS00636">
    <property type="entry name" value="DNAJ_1"/>
    <property type="match status" value="1"/>
</dbReference>
<dbReference type="PROSITE" id="PS50076">
    <property type="entry name" value="DNAJ_2"/>
    <property type="match status" value="1"/>
</dbReference>
<dbReference type="PROSITE" id="PS51188">
    <property type="entry name" value="ZF_CR"/>
    <property type="match status" value="1"/>
</dbReference>
<organism>
    <name type="scientific">Lactiplantibacillus plantarum (strain ATCC BAA-793 / NCIMB 8826 / WCFS1)</name>
    <name type="common">Lactobacillus plantarum</name>
    <dbReference type="NCBI Taxonomy" id="220668"/>
    <lineage>
        <taxon>Bacteria</taxon>
        <taxon>Bacillati</taxon>
        <taxon>Bacillota</taxon>
        <taxon>Bacilli</taxon>
        <taxon>Lactobacillales</taxon>
        <taxon>Lactobacillaceae</taxon>
        <taxon>Lactiplantibacillus</taxon>
    </lineage>
</organism>
<gene>
    <name evidence="1" type="primary">dnaJ</name>
    <name type="ordered locus">lp_2026</name>
</gene>
<feature type="chain" id="PRO_0000070804" description="Chaperone protein DnaJ">
    <location>
        <begin position="1"/>
        <end position="380"/>
    </location>
</feature>
<feature type="domain" description="J" evidence="1">
    <location>
        <begin position="5"/>
        <end position="69"/>
    </location>
</feature>
<feature type="repeat" description="CXXCXGXG motif">
    <location>
        <begin position="153"/>
        <end position="160"/>
    </location>
</feature>
<feature type="repeat" description="CXXCXGXG motif">
    <location>
        <begin position="170"/>
        <end position="177"/>
    </location>
</feature>
<feature type="repeat" description="CXXCXGXG motif">
    <location>
        <begin position="196"/>
        <end position="203"/>
    </location>
</feature>
<feature type="repeat" description="CXXCXGXG motif">
    <location>
        <begin position="210"/>
        <end position="217"/>
    </location>
</feature>
<feature type="zinc finger region" description="CR-type" evidence="1">
    <location>
        <begin position="140"/>
        <end position="222"/>
    </location>
</feature>
<feature type="binding site" evidence="1">
    <location>
        <position position="153"/>
    </location>
    <ligand>
        <name>Zn(2+)</name>
        <dbReference type="ChEBI" id="CHEBI:29105"/>
        <label>1</label>
    </ligand>
</feature>
<feature type="binding site" evidence="1">
    <location>
        <position position="156"/>
    </location>
    <ligand>
        <name>Zn(2+)</name>
        <dbReference type="ChEBI" id="CHEBI:29105"/>
        <label>1</label>
    </ligand>
</feature>
<feature type="binding site" evidence="1">
    <location>
        <position position="170"/>
    </location>
    <ligand>
        <name>Zn(2+)</name>
        <dbReference type="ChEBI" id="CHEBI:29105"/>
        <label>2</label>
    </ligand>
</feature>
<feature type="binding site" evidence="1">
    <location>
        <position position="173"/>
    </location>
    <ligand>
        <name>Zn(2+)</name>
        <dbReference type="ChEBI" id="CHEBI:29105"/>
        <label>2</label>
    </ligand>
</feature>
<feature type="binding site" evidence="1">
    <location>
        <position position="196"/>
    </location>
    <ligand>
        <name>Zn(2+)</name>
        <dbReference type="ChEBI" id="CHEBI:29105"/>
        <label>2</label>
    </ligand>
</feature>
<feature type="binding site" evidence="1">
    <location>
        <position position="199"/>
    </location>
    <ligand>
        <name>Zn(2+)</name>
        <dbReference type="ChEBI" id="CHEBI:29105"/>
        <label>2</label>
    </ligand>
</feature>
<feature type="binding site" evidence="1">
    <location>
        <position position="210"/>
    </location>
    <ligand>
        <name>Zn(2+)</name>
        <dbReference type="ChEBI" id="CHEBI:29105"/>
        <label>1</label>
    </ligand>
</feature>
<feature type="binding site" evidence="1">
    <location>
        <position position="213"/>
    </location>
    <ligand>
        <name>Zn(2+)</name>
        <dbReference type="ChEBI" id="CHEBI:29105"/>
        <label>1</label>
    </ligand>
</feature>
<protein>
    <recommendedName>
        <fullName evidence="1">Chaperone protein DnaJ</fullName>
    </recommendedName>
</protein>
<accession>Q88VM1</accession>
<accession>F9UPY3</accession>
<sequence length="380" mass="40550">MAEQDLYKVLGVEKDASQDEIKKAYRKLSKKYHPDLNHEPGAEEKFKAVNEAYETLGDAQKRAQYDQFGSTGGQQGFGGAGGFGGQDFGGFGGGGGFEDIFSSFFGGGAGGSRRSNPTAPQQGRDLQYEMTLKFEDAIFGKKTTITYNREEQCETCGGSGAKPGTSPVTCSKCHGAGYIQVQTNTPLGRMMSQQVCDVCHGTGKEIKDKCATCGGSGHTEQSHSIKVTVPAGVEEGQQMRLQNQGEAGTNGGPYGDLFIIFRVEPSKDFERDGATIYFKLPIDFVQAALGDEVQVKTVHGDVKLKIPAGTQTGTTFRLRGKGAPRLRGNGNGDERVTVNIETPTHLNKGQKEALKTFAKASGKSVAGNGKSSLFDKLRGV</sequence>
<reference key="1">
    <citation type="journal article" date="2003" name="Proc. Natl. Acad. Sci. U.S.A.">
        <title>Complete genome sequence of Lactobacillus plantarum WCFS1.</title>
        <authorList>
            <person name="Kleerebezem M."/>
            <person name="Boekhorst J."/>
            <person name="van Kranenburg R."/>
            <person name="Molenaar D."/>
            <person name="Kuipers O.P."/>
            <person name="Leer R."/>
            <person name="Tarchini R."/>
            <person name="Peters S.A."/>
            <person name="Sandbrink H.M."/>
            <person name="Fiers M.W.E.J."/>
            <person name="Stiekema W."/>
            <person name="Klein Lankhorst R.M."/>
            <person name="Bron P.A."/>
            <person name="Hoffer S.M."/>
            <person name="Nierop Groot M.N."/>
            <person name="Kerkhoven R."/>
            <person name="De Vries M."/>
            <person name="Ursing B."/>
            <person name="De Vos W.M."/>
            <person name="Siezen R.J."/>
        </authorList>
    </citation>
    <scope>NUCLEOTIDE SEQUENCE [LARGE SCALE GENOMIC DNA]</scope>
    <source>
        <strain>ATCC BAA-793 / NCIMB 8826 / WCFS1</strain>
    </source>
</reference>
<reference key="2">
    <citation type="journal article" date="2012" name="J. Bacteriol.">
        <title>Complete resequencing and reannotation of the Lactobacillus plantarum WCFS1 genome.</title>
        <authorList>
            <person name="Siezen R.J."/>
            <person name="Francke C."/>
            <person name="Renckens B."/>
            <person name="Boekhorst J."/>
            <person name="Wels M."/>
            <person name="Kleerebezem M."/>
            <person name="van Hijum S.A."/>
        </authorList>
    </citation>
    <scope>NUCLEOTIDE SEQUENCE [LARGE SCALE GENOMIC DNA]</scope>
    <scope>GENOME REANNOTATION</scope>
    <source>
        <strain>ATCC BAA-793 / NCIMB 8826 / WCFS1</strain>
    </source>
</reference>
<name>DNAJ_LACPL</name>
<proteinExistence type="inferred from homology"/>